<sequence length="453" mass="50058">MKFFALAALFASTVNSIAVDGLIPGARVIPANDVVALKKAGAYHQKHHHRRTVIIRSSSSDEDDVSADFLWGIKRANHGGRLLLQNGKKYVIGKKLDLTFLKDIEVQLDGELKFTNDVPYWQANNFYYDFQKSISFWRWGGEDIKIFGSGVLNGNGQRWYNEFAGQEILDPNNKYYRPILFVTENATRVSVEGITQLNSPCWTNFFVRTKDISFDNVFIHAYSTNASALPKNTDGFDTLNVDGLTVTNTRVDIGDDCLSPKPNTTNVFVKNLWCNGTHGASMGSIGQYPGVLDIIENVWIENVTLLNGENGARLKAWAGPDVGYGRINNVTYKNIHVENTDNPIVLDQCYFNINATQCAAYPSRVNFTNIVFEDIYGTSSGKRGKVVADLTCSPNAVCSGIRLKNIHLTSPAGSPPVIVCDGIQGDIGVECQSSSNSTTRRSVDLARSLKYRA</sequence>
<accession>Q4WBK6</accession>
<keyword id="KW-0961">Cell wall biogenesis/degradation</keyword>
<keyword id="KW-1015">Disulfide bond</keyword>
<keyword id="KW-0325">Glycoprotein</keyword>
<keyword id="KW-0326">Glycosidase</keyword>
<keyword id="KW-0378">Hydrolase</keyword>
<keyword id="KW-1185">Reference proteome</keyword>
<keyword id="KW-0677">Repeat</keyword>
<keyword id="KW-0964">Secreted</keyword>
<keyword id="KW-0732">Signal</keyword>
<name>PGXB_ASPFU</name>
<comment type="function">
    <text evidence="1">Specific in hydrolyzing the terminal glycosidic bond of polygalacturonic acid and oligogalacturonates.</text>
</comment>
<comment type="catalytic activity">
    <reaction>
        <text>[(1-&gt;4)-alpha-D-galacturonosyl](n) + H2O = alpha-D-galacturonate + [(1-&gt;4)-alpha-D-galacturonosyl](n-1)</text>
        <dbReference type="Rhea" id="RHEA:14117"/>
        <dbReference type="Rhea" id="RHEA-COMP:14570"/>
        <dbReference type="Rhea" id="RHEA-COMP:14572"/>
        <dbReference type="ChEBI" id="CHEBI:15377"/>
        <dbReference type="ChEBI" id="CHEBI:58658"/>
        <dbReference type="ChEBI" id="CHEBI:140523"/>
        <dbReference type="EC" id="3.2.1.67"/>
    </reaction>
</comment>
<comment type="subcellular location">
    <subcellularLocation>
        <location evidence="1">Secreted</location>
    </subcellularLocation>
</comment>
<comment type="similarity">
    <text evidence="3">Belongs to the glycosyl hydrolase 28 family.</text>
</comment>
<comment type="sequence caution" evidence="3">
    <conflict type="erroneous gene model prediction">
        <sequence resource="EMBL-CDS" id="EAL84906"/>
    </conflict>
</comment>
<feature type="signal peptide" evidence="2">
    <location>
        <begin position="1"/>
        <end position="16"/>
    </location>
</feature>
<feature type="chain" id="PRO_0000393677" description="Probable exopolygalacturonase B">
    <location>
        <begin position="17"/>
        <end position="453"/>
    </location>
</feature>
<feature type="repeat" description="PbH1 1">
    <location>
        <begin position="295"/>
        <end position="316"/>
    </location>
</feature>
<feature type="repeat" description="PbH1 2">
    <location>
        <begin position="327"/>
        <end position="348"/>
    </location>
</feature>
<feature type="repeat" description="PbH1 3">
    <location>
        <begin position="362"/>
        <end position="405"/>
    </location>
</feature>
<feature type="active site" description="Proton donor" evidence="1">
    <location>
        <position position="255"/>
    </location>
</feature>
<feature type="active site" evidence="1">
    <location>
        <position position="278"/>
    </location>
</feature>
<feature type="glycosylation site" description="N-linked (GlcNAc...) asparagine" evidence="2">
    <location>
        <position position="185"/>
    </location>
</feature>
<feature type="glycosylation site" description="N-linked (GlcNAc...) asparagine" evidence="2">
    <location>
        <position position="225"/>
    </location>
</feature>
<feature type="glycosylation site" description="N-linked (GlcNAc...) asparagine" evidence="2">
    <location>
        <position position="263"/>
    </location>
</feature>
<feature type="glycosylation site" description="N-linked (GlcNAc...) asparagine" evidence="2">
    <location>
        <position position="275"/>
    </location>
</feature>
<feature type="glycosylation site" description="N-linked (GlcNAc...) asparagine" evidence="2">
    <location>
        <position position="302"/>
    </location>
</feature>
<feature type="glycosylation site" description="N-linked (GlcNAc...) asparagine" evidence="2">
    <location>
        <position position="329"/>
    </location>
</feature>
<feature type="glycosylation site" description="N-linked (GlcNAc...) asparagine" evidence="2">
    <location>
        <position position="354"/>
    </location>
</feature>
<feature type="glycosylation site" description="N-linked (GlcNAc...) asparagine" evidence="2">
    <location>
        <position position="366"/>
    </location>
</feature>
<feature type="glycosylation site" description="N-linked (GlcNAc...) asparagine" evidence="2">
    <location>
        <position position="436"/>
    </location>
</feature>
<feature type="disulfide bond" evidence="1">
    <location>
        <begin position="257"/>
        <end position="274"/>
    </location>
</feature>
<feature type="disulfide bond" evidence="1">
    <location>
        <begin position="392"/>
        <end position="398"/>
    </location>
</feature>
<organism>
    <name type="scientific">Aspergillus fumigatus (strain ATCC MYA-4609 / CBS 101355 / FGSC A1100 / Af293)</name>
    <name type="common">Neosartorya fumigata</name>
    <dbReference type="NCBI Taxonomy" id="330879"/>
    <lineage>
        <taxon>Eukaryota</taxon>
        <taxon>Fungi</taxon>
        <taxon>Dikarya</taxon>
        <taxon>Ascomycota</taxon>
        <taxon>Pezizomycotina</taxon>
        <taxon>Eurotiomycetes</taxon>
        <taxon>Eurotiomycetidae</taxon>
        <taxon>Eurotiales</taxon>
        <taxon>Aspergillaceae</taxon>
        <taxon>Aspergillus</taxon>
        <taxon>Aspergillus subgen. Fumigati</taxon>
    </lineage>
</organism>
<evidence type="ECO:0000250" key="1"/>
<evidence type="ECO:0000255" key="2"/>
<evidence type="ECO:0000305" key="3"/>
<reference key="1">
    <citation type="journal article" date="2005" name="Nature">
        <title>Genomic sequence of the pathogenic and allergenic filamentous fungus Aspergillus fumigatus.</title>
        <authorList>
            <person name="Nierman W.C."/>
            <person name="Pain A."/>
            <person name="Anderson M.J."/>
            <person name="Wortman J.R."/>
            <person name="Kim H.S."/>
            <person name="Arroyo J."/>
            <person name="Berriman M."/>
            <person name="Abe K."/>
            <person name="Archer D.B."/>
            <person name="Bermejo C."/>
            <person name="Bennett J.W."/>
            <person name="Bowyer P."/>
            <person name="Chen D."/>
            <person name="Collins M."/>
            <person name="Coulsen R."/>
            <person name="Davies R."/>
            <person name="Dyer P.S."/>
            <person name="Farman M.L."/>
            <person name="Fedorova N."/>
            <person name="Fedorova N.D."/>
            <person name="Feldblyum T.V."/>
            <person name="Fischer R."/>
            <person name="Fosker N."/>
            <person name="Fraser A."/>
            <person name="Garcia J.L."/>
            <person name="Garcia M.J."/>
            <person name="Goble A."/>
            <person name="Goldman G.H."/>
            <person name="Gomi K."/>
            <person name="Griffith-Jones S."/>
            <person name="Gwilliam R."/>
            <person name="Haas B.J."/>
            <person name="Haas H."/>
            <person name="Harris D.E."/>
            <person name="Horiuchi H."/>
            <person name="Huang J."/>
            <person name="Humphray S."/>
            <person name="Jimenez J."/>
            <person name="Keller N."/>
            <person name="Khouri H."/>
            <person name="Kitamoto K."/>
            <person name="Kobayashi T."/>
            <person name="Konzack S."/>
            <person name="Kulkarni R."/>
            <person name="Kumagai T."/>
            <person name="Lafton A."/>
            <person name="Latge J.-P."/>
            <person name="Li W."/>
            <person name="Lord A."/>
            <person name="Lu C."/>
            <person name="Majoros W.H."/>
            <person name="May G.S."/>
            <person name="Miller B.L."/>
            <person name="Mohamoud Y."/>
            <person name="Molina M."/>
            <person name="Monod M."/>
            <person name="Mouyna I."/>
            <person name="Mulligan S."/>
            <person name="Murphy L.D."/>
            <person name="O'Neil S."/>
            <person name="Paulsen I."/>
            <person name="Penalva M.A."/>
            <person name="Pertea M."/>
            <person name="Price C."/>
            <person name="Pritchard B.L."/>
            <person name="Quail M.A."/>
            <person name="Rabbinowitsch E."/>
            <person name="Rawlins N."/>
            <person name="Rajandream M.A."/>
            <person name="Reichard U."/>
            <person name="Renauld H."/>
            <person name="Robson G.D."/>
            <person name="Rodriguez de Cordoba S."/>
            <person name="Rodriguez-Pena J.M."/>
            <person name="Ronning C.M."/>
            <person name="Rutter S."/>
            <person name="Salzberg S.L."/>
            <person name="Sanchez M."/>
            <person name="Sanchez-Ferrero J.C."/>
            <person name="Saunders D."/>
            <person name="Seeger K."/>
            <person name="Squares R."/>
            <person name="Squares S."/>
            <person name="Takeuchi M."/>
            <person name="Tekaia F."/>
            <person name="Turner G."/>
            <person name="Vazquez de Aldana C.R."/>
            <person name="Weidman J."/>
            <person name="White O."/>
            <person name="Woodward J.R."/>
            <person name="Yu J.-H."/>
            <person name="Fraser C.M."/>
            <person name="Galagan J.E."/>
            <person name="Asai K."/>
            <person name="Machida M."/>
            <person name="Hall N."/>
            <person name="Barrell B.G."/>
            <person name="Denning D.W."/>
        </authorList>
    </citation>
    <scope>NUCLEOTIDE SEQUENCE [LARGE SCALE GENOMIC DNA]</scope>
    <source>
        <strain>ATCC MYA-4609 / CBS 101355 / FGSC A1100 / Af293</strain>
    </source>
</reference>
<proteinExistence type="inferred from homology"/>
<dbReference type="EC" id="3.2.1.67"/>
<dbReference type="EMBL" id="AAHF01000014">
    <property type="protein sequence ID" value="EAL84906.1"/>
    <property type="status" value="ALT_SEQ"/>
    <property type="molecule type" value="Genomic_DNA"/>
</dbReference>
<dbReference type="RefSeq" id="XP_746944.1">
    <property type="nucleotide sequence ID" value="XM_741851.1"/>
</dbReference>
<dbReference type="SMR" id="Q4WBK6"/>
<dbReference type="STRING" id="330879.Q4WBK6"/>
<dbReference type="GlyCosmos" id="Q4WBK6">
    <property type="glycosylation" value="9 sites, No reported glycans"/>
</dbReference>
<dbReference type="GeneID" id="3504371"/>
<dbReference type="KEGG" id="afm:AFUA_8G02630"/>
<dbReference type="VEuPathDB" id="FungiDB:Afu8g02630"/>
<dbReference type="eggNOG" id="ENOG502QPPR">
    <property type="taxonomic scope" value="Eukaryota"/>
</dbReference>
<dbReference type="HOGENOM" id="CLU_016031_1_0_1"/>
<dbReference type="InParanoid" id="Q4WBK6"/>
<dbReference type="OrthoDB" id="187139at2759"/>
<dbReference type="Proteomes" id="UP000002530">
    <property type="component" value="Chromosome 8"/>
</dbReference>
<dbReference type="GO" id="GO:0005576">
    <property type="term" value="C:extracellular region"/>
    <property type="evidence" value="ECO:0000250"/>
    <property type="project" value="UniProtKB"/>
</dbReference>
<dbReference type="GO" id="GO:0047911">
    <property type="term" value="F:galacturan 1,4-alpha-galacturonidase activity"/>
    <property type="evidence" value="ECO:0007669"/>
    <property type="project" value="UniProtKB-EC"/>
</dbReference>
<dbReference type="GO" id="GO:0004650">
    <property type="term" value="F:polygalacturonase activity"/>
    <property type="evidence" value="ECO:0000250"/>
    <property type="project" value="UniProtKB"/>
</dbReference>
<dbReference type="GO" id="GO:0071555">
    <property type="term" value="P:cell wall organization"/>
    <property type="evidence" value="ECO:0007669"/>
    <property type="project" value="UniProtKB-KW"/>
</dbReference>
<dbReference type="GO" id="GO:0045490">
    <property type="term" value="P:pectin catabolic process"/>
    <property type="evidence" value="ECO:0000250"/>
    <property type="project" value="UniProtKB"/>
</dbReference>
<dbReference type="FunFam" id="2.160.20.10:FF:000040">
    <property type="entry name" value="Probable exopolygalacturonase B"/>
    <property type="match status" value="1"/>
</dbReference>
<dbReference type="Gene3D" id="2.160.20.10">
    <property type="entry name" value="Single-stranded right-handed beta-helix, Pectin lyase-like"/>
    <property type="match status" value="1"/>
</dbReference>
<dbReference type="InterPro" id="IPR000743">
    <property type="entry name" value="Glyco_hydro_28"/>
</dbReference>
<dbReference type="InterPro" id="IPR012334">
    <property type="entry name" value="Pectin_lyas_fold"/>
</dbReference>
<dbReference type="InterPro" id="IPR011050">
    <property type="entry name" value="Pectin_lyase_fold/virulence"/>
</dbReference>
<dbReference type="PANTHER" id="PTHR31736">
    <property type="match status" value="1"/>
</dbReference>
<dbReference type="PANTHER" id="PTHR31736:SF6">
    <property type="entry name" value="EXOPOLYGALACTURONASE B-RELATED"/>
    <property type="match status" value="1"/>
</dbReference>
<dbReference type="Pfam" id="PF00295">
    <property type="entry name" value="Glyco_hydro_28"/>
    <property type="match status" value="1"/>
</dbReference>
<dbReference type="SUPFAM" id="SSF51126">
    <property type="entry name" value="Pectin lyase-like"/>
    <property type="match status" value="1"/>
</dbReference>
<protein>
    <recommendedName>
        <fullName>Probable exopolygalacturonase B</fullName>
        <ecNumber>3.2.1.67</ecNumber>
    </recommendedName>
    <alternativeName>
        <fullName>Galacturan 1,4-alpha-galacturonidase B</fullName>
    </alternativeName>
    <alternativeName>
        <fullName>Poly(1,4-alpha-D-galacturonide)galacturonohydrolase B</fullName>
    </alternativeName>
</protein>
<gene>
    <name type="primary">pgxB</name>
    <name type="ORF">AFUA_8G02630</name>
</gene>